<evidence type="ECO:0000255" key="1">
    <source>
        <dbReference type="HAMAP-Rule" id="MF_00032"/>
    </source>
</evidence>
<gene>
    <name evidence="1" type="primary">eif6</name>
    <name type="ordered locus">YN1551_1054</name>
</gene>
<sequence length="223" mass="24503">MNLQRLSIFGTDNIGVYIYTNNKYTVVPRGLDSETKENIVQILGTELIEAEISRSFLLGIFISGNDNGILLPKSTIDDEFRFLKENLRDCRVEVLNSKVTALGNTILTNNKAALIYPEFNDIEEKIIKETLGVEEIRRGKIAQMITVGSVGVVTNKGGLVHVDTSEKELKELEKLFSVKIDIGTVNFGSVFIRSGLVANDKGTLVGASTTGPEILRIQKALGE</sequence>
<organism>
    <name type="scientific">Saccharolobus islandicus (strain Y.N.15.51 / Yellowstone #2)</name>
    <name type="common">Sulfolobus islandicus</name>
    <dbReference type="NCBI Taxonomy" id="419942"/>
    <lineage>
        <taxon>Archaea</taxon>
        <taxon>Thermoproteota</taxon>
        <taxon>Thermoprotei</taxon>
        <taxon>Sulfolobales</taxon>
        <taxon>Sulfolobaceae</taxon>
        <taxon>Saccharolobus</taxon>
    </lineage>
</organism>
<reference key="1">
    <citation type="journal article" date="2009" name="Proc. Natl. Acad. Sci. U.S.A.">
        <title>Biogeography of the Sulfolobus islandicus pan-genome.</title>
        <authorList>
            <person name="Reno M.L."/>
            <person name="Held N.L."/>
            <person name="Fields C.J."/>
            <person name="Burke P.V."/>
            <person name="Whitaker R.J."/>
        </authorList>
    </citation>
    <scope>NUCLEOTIDE SEQUENCE [LARGE SCALE GENOMIC DNA]</scope>
    <source>
        <strain>Y.N.15.51 / Yellowstone #2</strain>
    </source>
</reference>
<feature type="chain" id="PRO_1000202011" description="Translation initiation factor 6">
    <location>
        <begin position="1"/>
        <end position="223"/>
    </location>
</feature>
<comment type="function">
    <text evidence="1">Binds to the 50S ribosomal subunit and prevents its association with the 30S ribosomal subunit to form the 70S initiation complex.</text>
</comment>
<comment type="similarity">
    <text evidence="1">Belongs to the eIF-6 family.</text>
</comment>
<keyword id="KW-0396">Initiation factor</keyword>
<keyword id="KW-0648">Protein biosynthesis</keyword>
<dbReference type="EMBL" id="CP001404">
    <property type="protein sequence ID" value="ACP48161.1"/>
    <property type="molecule type" value="Genomic_DNA"/>
</dbReference>
<dbReference type="RefSeq" id="WP_012713966.1">
    <property type="nucleotide sequence ID" value="NC_012623.1"/>
</dbReference>
<dbReference type="SMR" id="C3NGA1"/>
<dbReference type="GeneID" id="7809751"/>
<dbReference type="KEGG" id="sin:YN1551_1054"/>
<dbReference type="HOGENOM" id="CLU_071894_1_0_2"/>
<dbReference type="Proteomes" id="UP000006818">
    <property type="component" value="Chromosome"/>
</dbReference>
<dbReference type="GO" id="GO:0043022">
    <property type="term" value="F:ribosome binding"/>
    <property type="evidence" value="ECO:0007669"/>
    <property type="project" value="InterPro"/>
</dbReference>
<dbReference type="GO" id="GO:0003743">
    <property type="term" value="F:translation initiation factor activity"/>
    <property type="evidence" value="ECO:0007669"/>
    <property type="project" value="UniProtKB-UniRule"/>
</dbReference>
<dbReference type="GO" id="GO:0042256">
    <property type="term" value="P:cytosolic ribosome assembly"/>
    <property type="evidence" value="ECO:0007669"/>
    <property type="project" value="InterPro"/>
</dbReference>
<dbReference type="FunFam" id="3.75.10.10:FF:000011">
    <property type="entry name" value="Translation initiation factor 6"/>
    <property type="match status" value="1"/>
</dbReference>
<dbReference type="Gene3D" id="3.75.10.10">
    <property type="entry name" value="L-arginine/glycine Amidinotransferase, Chain A"/>
    <property type="match status" value="1"/>
</dbReference>
<dbReference type="HAMAP" id="MF_00032">
    <property type="entry name" value="eIF_6"/>
    <property type="match status" value="1"/>
</dbReference>
<dbReference type="InterPro" id="IPR002769">
    <property type="entry name" value="eIF6"/>
</dbReference>
<dbReference type="NCBIfam" id="TIGR00323">
    <property type="entry name" value="eIF-6"/>
    <property type="match status" value="1"/>
</dbReference>
<dbReference type="NCBIfam" id="NF003126">
    <property type="entry name" value="PRK04046.1-1"/>
    <property type="match status" value="1"/>
</dbReference>
<dbReference type="PANTHER" id="PTHR10784">
    <property type="entry name" value="TRANSLATION INITIATION FACTOR 6"/>
    <property type="match status" value="1"/>
</dbReference>
<dbReference type="Pfam" id="PF01912">
    <property type="entry name" value="eIF-6"/>
    <property type="match status" value="1"/>
</dbReference>
<dbReference type="PIRSF" id="PIRSF006413">
    <property type="entry name" value="IF-6"/>
    <property type="match status" value="1"/>
</dbReference>
<dbReference type="SMART" id="SM00654">
    <property type="entry name" value="eIF6"/>
    <property type="match status" value="1"/>
</dbReference>
<dbReference type="SUPFAM" id="SSF55909">
    <property type="entry name" value="Pentein"/>
    <property type="match status" value="1"/>
</dbReference>
<name>IF6_SACI1</name>
<accession>C3NGA1</accession>
<protein>
    <recommendedName>
        <fullName evidence="1">Translation initiation factor 6</fullName>
        <shortName evidence="1">aIF-6</shortName>
    </recommendedName>
</protein>
<proteinExistence type="inferred from homology"/>